<accession>B5EZK0</accession>
<proteinExistence type="inferred from homology"/>
<sequence>MIPLTHGLILAAILFVLGLTGLVIRRNLLFMLIGLEIMINASALAFVVAGSYWGQTDGQVMYILAISLAAAEASIGLALLLQLHRRRQNLNIDSVSEMRG</sequence>
<protein>
    <recommendedName>
        <fullName evidence="1">NADH-quinone oxidoreductase subunit K</fullName>
        <ecNumber evidence="1">7.1.1.-</ecNumber>
    </recommendedName>
    <alternativeName>
        <fullName evidence="1">NADH dehydrogenase I subunit K</fullName>
    </alternativeName>
    <alternativeName>
        <fullName evidence="1">NDH-1 subunit K</fullName>
    </alternativeName>
</protein>
<organism>
    <name type="scientific">Salmonella agona (strain SL483)</name>
    <dbReference type="NCBI Taxonomy" id="454166"/>
    <lineage>
        <taxon>Bacteria</taxon>
        <taxon>Pseudomonadati</taxon>
        <taxon>Pseudomonadota</taxon>
        <taxon>Gammaproteobacteria</taxon>
        <taxon>Enterobacterales</taxon>
        <taxon>Enterobacteriaceae</taxon>
        <taxon>Salmonella</taxon>
    </lineage>
</organism>
<comment type="function">
    <text evidence="1">NDH-1 shuttles electrons from NADH, via FMN and iron-sulfur (Fe-S) centers, to quinones in the respiratory chain. The immediate electron acceptor for the enzyme in this species is believed to be ubiquinone. Couples the redox reaction to proton translocation (for every two electrons transferred, four hydrogen ions are translocated across the cytoplasmic membrane), and thus conserves the redox energy in a proton gradient.</text>
</comment>
<comment type="catalytic activity">
    <reaction evidence="1">
        <text>a quinone + NADH + 5 H(+)(in) = a quinol + NAD(+) + 4 H(+)(out)</text>
        <dbReference type="Rhea" id="RHEA:57888"/>
        <dbReference type="ChEBI" id="CHEBI:15378"/>
        <dbReference type="ChEBI" id="CHEBI:24646"/>
        <dbReference type="ChEBI" id="CHEBI:57540"/>
        <dbReference type="ChEBI" id="CHEBI:57945"/>
        <dbReference type="ChEBI" id="CHEBI:132124"/>
    </reaction>
</comment>
<comment type="subunit">
    <text evidence="1">NDH-1 is composed of 13 different subunits. Subunits NuoA, H, J, K, L, M, N constitute the membrane sector of the complex.</text>
</comment>
<comment type="subcellular location">
    <subcellularLocation>
        <location evidence="1">Cell inner membrane</location>
        <topology evidence="1">Multi-pass membrane protein</topology>
    </subcellularLocation>
</comment>
<comment type="similarity">
    <text evidence="1">Belongs to the complex I subunit 4L family.</text>
</comment>
<reference key="1">
    <citation type="journal article" date="2011" name="J. Bacteriol.">
        <title>Comparative genomics of 28 Salmonella enterica isolates: evidence for CRISPR-mediated adaptive sublineage evolution.</title>
        <authorList>
            <person name="Fricke W.F."/>
            <person name="Mammel M.K."/>
            <person name="McDermott P.F."/>
            <person name="Tartera C."/>
            <person name="White D.G."/>
            <person name="Leclerc J.E."/>
            <person name="Ravel J."/>
            <person name="Cebula T.A."/>
        </authorList>
    </citation>
    <scope>NUCLEOTIDE SEQUENCE [LARGE SCALE GENOMIC DNA]</scope>
    <source>
        <strain>SL483</strain>
    </source>
</reference>
<gene>
    <name evidence="1" type="primary">nuoK</name>
    <name type="ordered locus">SeAg_B2458</name>
</gene>
<dbReference type="EC" id="7.1.1.-" evidence="1"/>
<dbReference type="EMBL" id="CP001138">
    <property type="protein sequence ID" value="ACH52431.1"/>
    <property type="molecule type" value="Genomic_DNA"/>
</dbReference>
<dbReference type="RefSeq" id="WP_000612687.1">
    <property type="nucleotide sequence ID" value="NC_011149.1"/>
</dbReference>
<dbReference type="SMR" id="B5EZK0"/>
<dbReference type="KEGG" id="sea:SeAg_B2458"/>
<dbReference type="HOGENOM" id="CLU_144724_0_1_6"/>
<dbReference type="Proteomes" id="UP000008819">
    <property type="component" value="Chromosome"/>
</dbReference>
<dbReference type="GO" id="GO:0030964">
    <property type="term" value="C:NADH dehydrogenase complex"/>
    <property type="evidence" value="ECO:0007669"/>
    <property type="project" value="TreeGrafter"/>
</dbReference>
<dbReference type="GO" id="GO:0005886">
    <property type="term" value="C:plasma membrane"/>
    <property type="evidence" value="ECO:0007669"/>
    <property type="project" value="UniProtKB-SubCell"/>
</dbReference>
<dbReference type="GO" id="GO:0050136">
    <property type="term" value="F:NADH:ubiquinone reductase (non-electrogenic) activity"/>
    <property type="evidence" value="ECO:0007669"/>
    <property type="project" value="UniProtKB-UniRule"/>
</dbReference>
<dbReference type="GO" id="GO:0048038">
    <property type="term" value="F:quinone binding"/>
    <property type="evidence" value="ECO:0007669"/>
    <property type="project" value="UniProtKB-KW"/>
</dbReference>
<dbReference type="GO" id="GO:0042773">
    <property type="term" value="P:ATP synthesis coupled electron transport"/>
    <property type="evidence" value="ECO:0007669"/>
    <property type="project" value="InterPro"/>
</dbReference>
<dbReference type="FunFam" id="1.10.287.3510:FF:000001">
    <property type="entry name" value="NADH-quinone oxidoreductase subunit K"/>
    <property type="match status" value="1"/>
</dbReference>
<dbReference type="Gene3D" id="1.10.287.3510">
    <property type="match status" value="1"/>
</dbReference>
<dbReference type="HAMAP" id="MF_01456">
    <property type="entry name" value="NDH1_NuoK"/>
    <property type="match status" value="1"/>
</dbReference>
<dbReference type="InterPro" id="IPR001133">
    <property type="entry name" value="NADH_UbQ_OxRdtase_chain4L/K"/>
</dbReference>
<dbReference type="InterPro" id="IPR039428">
    <property type="entry name" value="NUOK/Mnh_C1-like"/>
</dbReference>
<dbReference type="NCBIfam" id="NF004319">
    <property type="entry name" value="PRK05715.1-1"/>
    <property type="match status" value="1"/>
</dbReference>
<dbReference type="NCBIfam" id="NF004320">
    <property type="entry name" value="PRK05715.1-2"/>
    <property type="match status" value="1"/>
</dbReference>
<dbReference type="PANTHER" id="PTHR11434:SF16">
    <property type="entry name" value="NADH-UBIQUINONE OXIDOREDUCTASE CHAIN 4L"/>
    <property type="match status" value="1"/>
</dbReference>
<dbReference type="PANTHER" id="PTHR11434">
    <property type="entry name" value="NADH-UBIQUINONE OXIDOREDUCTASE SUBUNIT ND4L"/>
    <property type="match status" value="1"/>
</dbReference>
<dbReference type="Pfam" id="PF00420">
    <property type="entry name" value="Oxidored_q2"/>
    <property type="match status" value="1"/>
</dbReference>
<feature type="chain" id="PRO_0000390219" description="NADH-quinone oxidoreductase subunit K">
    <location>
        <begin position="1"/>
        <end position="100"/>
    </location>
</feature>
<feature type="transmembrane region" description="Helical" evidence="1">
    <location>
        <begin position="4"/>
        <end position="24"/>
    </location>
</feature>
<feature type="transmembrane region" description="Helical" evidence="1">
    <location>
        <begin position="28"/>
        <end position="48"/>
    </location>
</feature>
<feature type="transmembrane region" description="Helical" evidence="1">
    <location>
        <begin position="60"/>
        <end position="80"/>
    </location>
</feature>
<evidence type="ECO:0000255" key="1">
    <source>
        <dbReference type="HAMAP-Rule" id="MF_01456"/>
    </source>
</evidence>
<name>NUOK_SALA4</name>
<keyword id="KW-0997">Cell inner membrane</keyword>
<keyword id="KW-1003">Cell membrane</keyword>
<keyword id="KW-0472">Membrane</keyword>
<keyword id="KW-0520">NAD</keyword>
<keyword id="KW-0874">Quinone</keyword>
<keyword id="KW-1278">Translocase</keyword>
<keyword id="KW-0812">Transmembrane</keyword>
<keyword id="KW-1133">Transmembrane helix</keyword>
<keyword id="KW-0813">Transport</keyword>
<keyword id="KW-0830">Ubiquinone</keyword>